<evidence type="ECO:0000255" key="1"/>
<evidence type="ECO:0000255" key="2">
    <source>
        <dbReference type="PROSITE-ProRule" id="PRU00251"/>
    </source>
</evidence>
<evidence type="ECO:0000269" key="3">
    <source>
    </source>
</evidence>
<evidence type="ECO:0000305" key="4"/>
<organism>
    <name type="scientific">Arabidopsis thaliana</name>
    <name type="common">Mouse-ear cress</name>
    <dbReference type="NCBI Taxonomy" id="3702"/>
    <lineage>
        <taxon>Eukaryota</taxon>
        <taxon>Viridiplantae</taxon>
        <taxon>Streptophyta</taxon>
        <taxon>Embryophyta</taxon>
        <taxon>Tracheophyta</taxon>
        <taxon>Spermatophyta</taxon>
        <taxon>Magnoliopsida</taxon>
        <taxon>eudicotyledons</taxon>
        <taxon>Gunneridae</taxon>
        <taxon>Pentapetalae</taxon>
        <taxon>rosids</taxon>
        <taxon>malvids</taxon>
        <taxon>Brassicales</taxon>
        <taxon>Brassicaceae</taxon>
        <taxon>Camelineae</taxon>
        <taxon>Arabidopsis</taxon>
    </lineage>
</organism>
<gene>
    <name type="primary">AGL36</name>
    <name type="ordered locus">At5g26650</name>
    <name type="ORF">F21E10.10</name>
</gene>
<sequence length="366" mass="41811">MKKVKLSLIANERSRKTSFIKRKDGIFKKLHELSTLCGVQACALIYSPFIPVPESWPSREGAKKVASRFLEMPPTARTKKMMDQETYLMERITKAKEQLKNLAAENRELQVRRFMFDCVEGKMSQYHYDAKDLQDLQSCINLYLDQLNGRIESIKENGESLLSSVSPFPTRIGVDEIGDESFSDSPIHATTGVVDTLNATNPHVLTGDMTPFLDADATAVTASSRFFDHIPYENMNMSQNLHEPFQHLVPTNVCDFFQNQNMNQVQYQAPNNLFNQIQREFYNINLNLNLNLNSNQYLNQQQSFMNPMVEQHMNHVGGRESIPFVDGNCYNYHQLPSNQLPAVDHASTSYMPSTTGVYDPYINNNL</sequence>
<feature type="chain" id="PRO_0000363648" description="Agamous-like MADS-box protein AGL36">
    <location>
        <begin position="1"/>
        <end position="366"/>
    </location>
</feature>
<feature type="domain" description="MADS-box" evidence="2">
    <location>
        <begin position="1"/>
        <end position="59"/>
    </location>
</feature>
<feature type="coiled-coil region" evidence="1">
    <location>
        <begin position="86"/>
        <end position="115"/>
    </location>
</feature>
<name>AGL36_ARATH</name>
<protein>
    <recommendedName>
        <fullName>Agamous-like MADS-box protein AGL36</fullName>
    </recommendedName>
</protein>
<proteinExistence type="evidence at protein level"/>
<dbReference type="EMBL" id="AY141247">
    <property type="protein sequence ID" value="AAN52811.1"/>
    <property type="molecule type" value="mRNA"/>
</dbReference>
<dbReference type="EMBL" id="AF058914">
    <property type="protein sequence ID" value="AAC13588.1"/>
    <property type="status" value="ALT_INIT"/>
    <property type="molecule type" value="Genomic_DNA"/>
</dbReference>
<dbReference type="EMBL" id="CP002688">
    <property type="protein sequence ID" value="AED93581.1"/>
    <property type="molecule type" value="Genomic_DNA"/>
</dbReference>
<dbReference type="PIR" id="T01195">
    <property type="entry name" value="T01195"/>
</dbReference>
<dbReference type="RefSeq" id="NP_850880.2">
    <property type="nucleotide sequence ID" value="NM_180549.2"/>
</dbReference>
<dbReference type="SMR" id="Q7XJK6"/>
<dbReference type="BioGRID" id="17999">
    <property type="interactions" value="27"/>
</dbReference>
<dbReference type="FunCoup" id="Q7XJK6">
    <property type="interactions" value="17"/>
</dbReference>
<dbReference type="IntAct" id="Q7XJK6">
    <property type="interactions" value="30"/>
</dbReference>
<dbReference type="STRING" id="3702.Q7XJK6"/>
<dbReference type="iPTMnet" id="Q7XJK6"/>
<dbReference type="PaxDb" id="3702-AT5G26650.1"/>
<dbReference type="EnsemblPlants" id="AT5G26650.1">
    <property type="protein sequence ID" value="AT5G26650.1"/>
    <property type="gene ID" value="AT5G26650"/>
</dbReference>
<dbReference type="GeneID" id="832724"/>
<dbReference type="Gramene" id="AT5G26650.1">
    <property type="protein sequence ID" value="AT5G26650.1"/>
    <property type="gene ID" value="AT5G26650"/>
</dbReference>
<dbReference type="KEGG" id="ath:AT5G26650"/>
<dbReference type="Araport" id="AT5G26650"/>
<dbReference type="TAIR" id="AT5G26650">
    <property type="gene designation" value="AGL36"/>
</dbReference>
<dbReference type="eggNOG" id="KOG0014">
    <property type="taxonomic scope" value="Eukaryota"/>
</dbReference>
<dbReference type="HOGENOM" id="CLU_053053_7_1_1"/>
<dbReference type="InParanoid" id="Q7XJK6"/>
<dbReference type="OMA" id="ITKRIHM"/>
<dbReference type="PhylomeDB" id="Q7XJK6"/>
<dbReference type="PRO" id="PR:Q7XJK6"/>
<dbReference type="Proteomes" id="UP000006548">
    <property type="component" value="Chromosome 5"/>
</dbReference>
<dbReference type="ExpressionAtlas" id="Q7XJK6">
    <property type="expression patterns" value="baseline and differential"/>
</dbReference>
<dbReference type="GO" id="GO:0005634">
    <property type="term" value="C:nucleus"/>
    <property type="evidence" value="ECO:0007669"/>
    <property type="project" value="UniProtKB-SubCell"/>
</dbReference>
<dbReference type="GO" id="GO:0000987">
    <property type="term" value="F:cis-regulatory region sequence-specific DNA binding"/>
    <property type="evidence" value="ECO:0007669"/>
    <property type="project" value="InterPro"/>
</dbReference>
<dbReference type="GO" id="GO:0003700">
    <property type="term" value="F:DNA-binding transcription factor activity"/>
    <property type="evidence" value="ECO:0000250"/>
    <property type="project" value="TAIR"/>
</dbReference>
<dbReference type="GO" id="GO:0000981">
    <property type="term" value="F:DNA-binding transcription factor activity, RNA polymerase II-specific"/>
    <property type="evidence" value="ECO:0007669"/>
    <property type="project" value="InterPro"/>
</dbReference>
<dbReference type="GO" id="GO:0046983">
    <property type="term" value="F:protein dimerization activity"/>
    <property type="evidence" value="ECO:0007669"/>
    <property type="project" value="InterPro"/>
</dbReference>
<dbReference type="GO" id="GO:0045944">
    <property type="term" value="P:positive regulation of transcription by RNA polymerase II"/>
    <property type="evidence" value="ECO:0007669"/>
    <property type="project" value="InterPro"/>
</dbReference>
<dbReference type="CDD" id="cd00266">
    <property type="entry name" value="MADS_SRF_like"/>
    <property type="match status" value="1"/>
</dbReference>
<dbReference type="FunFam" id="3.40.1810.10:FF:000024">
    <property type="entry name" value="Agamous-like MADS-box protein AGL80"/>
    <property type="match status" value="1"/>
</dbReference>
<dbReference type="Gene3D" id="3.40.1810.10">
    <property type="entry name" value="Transcription factor, MADS-box"/>
    <property type="match status" value="1"/>
</dbReference>
<dbReference type="InterPro" id="IPR033897">
    <property type="entry name" value="SRF-like_MADS-box"/>
</dbReference>
<dbReference type="InterPro" id="IPR002100">
    <property type="entry name" value="TF_MADSbox"/>
</dbReference>
<dbReference type="InterPro" id="IPR036879">
    <property type="entry name" value="TF_MADSbox_sf"/>
</dbReference>
<dbReference type="PANTHER" id="PTHR11945:SF788">
    <property type="entry name" value="AGAMOUS-LIKE-34-RELATED"/>
    <property type="match status" value="1"/>
</dbReference>
<dbReference type="PANTHER" id="PTHR11945">
    <property type="entry name" value="MADS BOX PROTEIN"/>
    <property type="match status" value="1"/>
</dbReference>
<dbReference type="Pfam" id="PF00319">
    <property type="entry name" value="SRF-TF"/>
    <property type="match status" value="1"/>
</dbReference>
<dbReference type="PRINTS" id="PR00404">
    <property type="entry name" value="MADSDOMAIN"/>
</dbReference>
<dbReference type="SMART" id="SM00432">
    <property type="entry name" value="MADS"/>
    <property type="match status" value="1"/>
</dbReference>
<dbReference type="SUPFAM" id="SSF55455">
    <property type="entry name" value="SRF-like"/>
    <property type="match status" value="1"/>
</dbReference>
<dbReference type="PROSITE" id="PS50066">
    <property type="entry name" value="MADS_BOX_2"/>
    <property type="match status" value="1"/>
</dbReference>
<accession>Q7XJK6</accession>
<accession>O65248</accession>
<reference key="1">
    <citation type="journal article" date="2003" name="Plant Cell">
        <title>Molecular and phylogenetic analyses of the complete MADS-box transcription factor family in Arabidopsis: new openings to the MADS world.</title>
        <authorList>
            <person name="Parenicova L."/>
            <person name="de Folter S."/>
            <person name="Kieffer M."/>
            <person name="Horner D.S."/>
            <person name="Favalli C."/>
            <person name="Busscher J."/>
            <person name="Cook H.E."/>
            <person name="Ingram R.M."/>
            <person name="Kater M.M."/>
            <person name="Davies B."/>
            <person name="Angenent G.C."/>
            <person name="Colombo L."/>
        </authorList>
    </citation>
    <scope>NUCLEOTIDE SEQUENCE [MRNA]</scope>
    <source>
        <strain>cv. Columbia</strain>
    </source>
</reference>
<reference key="2">
    <citation type="journal article" date="2000" name="Nature">
        <title>Sequence and analysis of chromosome 5 of the plant Arabidopsis thaliana.</title>
        <authorList>
            <person name="Tabata S."/>
            <person name="Kaneko T."/>
            <person name="Nakamura Y."/>
            <person name="Kotani H."/>
            <person name="Kato T."/>
            <person name="Asamizu E."/>
            <person name="Miyajima N."/>
            <person name="Sasamoto S."/>
            <person name="Kimura T."/>
            <person name="Hosouchi T."/>
            <person name="Kawashima K."/>
            <person name="Kohara M."/>
            <person name="Matsumoto M."/>
            <person name="Matsuno A."/>
            <person name="Muraki A."/>
            <person name="Nakayama S."/>
            <person name="Nakazaki N."/>
            <person name="Naruo K."/>
            <person name="Okumura S."/>
            <person name="Shinpo S."/>
            <person name="Takeuchi C."/>
            <person name="Wada T."/>
            <person name="Watanabe A."/>
            <person name="Yamada M."/>
            <person name="Yasuda M."/>
            <person name="Sato S."/>
            <person name="de la Bastide M."/>
            <person name="Huang E."/>
            <person name="Spiegel L."/>
            <person name="Gnoj L."/>
            <person name="O'Shaughnessy A."/>
            <person name="Preston R."/>
            <person name="Habermann K."/>
            <person name="Murray J."/>
            <person name="Johnson D."/>
            <person name="Rohlfing T."/>
            <person name="Nelson J."/>
            <person name="Stoneking T."/>
            <person name="Pepin K."/>
            <person name="Spieth J."/>
            <person name="Sekhon M."/>
            <person name="Armstrong J."/>
            <person name="Becker M."/>
            <person name="Belter E."/>
            <person name="Cordum H."/>
            <person name="Cordes M."/>
            <person name="Courtney L."/>
            <person name="Courtney W."/>
            <person name="Dante M."/>
            <person name="Du H."/>
            <person name="Edwards J."/>
            <person name="Fryman J."/>
            <person name="Haakensen B."/>
            <person name="Lamar E."/>
            <person name="Latreille P."/>
            <person name="Leonard S."/>
            <person name="Meyer R."/>
            <person name="Mulvaney E."/>
            <person name="Ozersky P."/>
            <person name="Riley A."/>
            <person name="Strowmatt C."/>
            <person name="Wagner-McPherson C."/>
            <person name="Wollam A."/>
            <person name="Yoakum M."/>
            <person name="Bell M."/>
            <person name="Dedhia N."/>
            <person name="Parnell L."/>
            <person name="Shah R."/>
            <person name="Rodriguez M."/>
            <person name="Hoon See L."/>
            <person name="Vil D."/>
            <person name="Baker J."/>
            <person name="Kirchoff K."/>
            <person name="Toth K."/>
            <person name="King L."/>
            <person name="Bahret A."/>
            <person name="Miller B."/>
            <person name="Marra M.A."/>
            <person name="Martienssen R."/>
            <person name="McCombie W.R."/>
            <person name="Wilson R.K."/>
            <person name="Murphy G."/>
            <person name="Bancroft I."/>
            <person name="Volckaert G."/>
            <person name="Wambutt R."/>
            <person name="Duesterhoeft A."/>
            <person name="Stiekema W."/>
            <person name="Pohl T."/>
            <person name="Entian K.-D."/>
            <person name="Terryn N."/>
            <person name="Hartley N."/>
            <person name="Bent E."/>
            <person name="Johnson S."/>
            <person name="Langham S.-A."/>
            <person name="McCullagh B."/>
            <person name="Robben J."/>
            <person name="Grymonprez B."/>
            <person name="Zimmermann W."/>
            <person name="Ramsperger U."/>
            <person name="Wedler H."/>
            <person name="Balke K."/>
            <person name="Wedler E."/>
            <person name="Peters S."/>
            <person name="van Staveren M."/>
            <person name="Dirkse W."/>
            <person name="Mooijman P."/>
            <person name="Klein Lankhorst R."/>
            <person name="Weitzenegger T."/>
            <person name="Bothe G."/>
            <person name="Rose M."/>
            <person name="Hauf J."/>
            <person name="Berneiser S."/>
            <person name="Hempel S."/>
            <person name="Feldpausch M."/>
            <person name="Lamberth S."/>
            <person name="Villarroel R."/>
            <person name="Gielen J."/>
            <person name="Ardiles W."/>
            <person name="Bents O."/>
            <person name="Lemcke K."/>
            <person name="Kolesov G."/>
            <person name="Mayer K.F.X."/>
            <person name="Rudd S."/>
            <person name="Schoof H."/>
            <person name="Schueller C."/>
            <person name="Zaccaria P."/>
            <person name="Mewes H.-W."/>
            <person name="Bevan M."/>
            <person name="Fransz P.F."/>
        </authorList>
    </citation>
    <scope>NUCLEOTIDE SEQUENCE [LARGE SCALE GENOMIC DNA]</scope>
    <source>
        <strain>cv. Columbia</strain>
    </source>
</reference>
<reference key="3">
    <citation type="journal article" date="2017" name="Plant J.">
        <title>Araport11: a complete reannotation of the Arabidopsis thaliana reference genome.</title>
        <authorList>
            <person name="Cheng C.Y."/>
            <person name="Krishnakumar V."/>
            <person name="Chan A.P."/>
            <person name="Thibaud-Nissen F."/>
            <person name="Schobel S."/>
            <person name="Town C.D."/>
        </authorList>
    </citation>
    <scope>GENOME REANNOTATION</scope>
    <source>
        <strain>cv. Columbia</strain>
    </source>
</reference>
<reference key="4">
    <citation type="journal article" date="2005" name="Plant Cell">
        <title>Comprehensive interaction map of the Arabidopsis MADS Box transcription factors.</title>
        <authorList>
            <person name="de Folter S."/>
            <person name="Immink R.G.H."/>
            <person name="Kieffer M."/>
            <person name="Parenicova L."/>
            <person name="Henz S.R."/>
            <person name="Weigel D."/>
            <person name="Busscher M."/>
            <person name="Kooiker M."/>
            <person name="Colombo L."/>
            <person name="Kater M.M."/>
            <person name="Davies B."/>
            <person name="Angenent G.C."/>
        </authorList>
    </citation>
    <scope>INTERACTION WITH AGL62</scope>
</reference>
<keyword id="KW-0175">Coiled coil</keyword>
<keyword id="KW-0238">DNA-binding</keyword>
<keyword id="KW-0539">Nucleus</keyword>
<keyword id="KW-1185">Reference proteome</keyword>
<keyword id="KW-0804">Transcription</keyword>
<keyword id="KW-0805">Transcription regulation</keyword>
<comment type="function">
    <text>Probable transcription factor.</text>
</comment>
<comment type="subunit">
    <text evidence="3">Interacts with AGL62.</text>
</comment>
<comment type="subcellular location">
    <subcellularLocation>
        <location evidence="2">Nucleus</location>
    </subcellularLocation>
</comment>
<comment type="sequence caution" evidence="4">
    <conflict type="erroneous initiation">
        <sequence resource="EMBL-CDS" id="AAC13588"/>
    </conflict>
</comment>